<sequence>MSRLEQRFAELKAEGRSALVTFVTAGDPGYDASLQILKGLPAAGADVIELGMPFTDPMADGVAIQLATLRALEAGQTLAKTLQMVREFRVDNQTTPIVLMGYYNPIHRFGVEPFVAEAKAAGVDGLIIVDLPPEHDAELATPAQAAGIDFIRLTTPTTDDARLPRVLERSSGFVYYVSVAGVTGAGSATTEHVTEAIARLRRHTDLPISVGFGIRTPEQAANIARLADGVVVGSALVDKIAQAKSADQAVNDVLSLCSALAEGVRGARR</sequence>
<gene>
    <name evidence="1" type="primary">trpA</name>
    <name type="ordered locus">PputGB1_0097</name>
</gene>
<reference key="1">
    <citation type="submission" date="2008-01" db="EMBL/GenBank/DDBJ databases">
        <title>Complete sequence of Pseudomonas putida GB-1.</title>
        <authorList>
            <consortium name="US DOE Joint Genome Institute"/>
            <person name="Copeland A."/>
            <person name="Lucas S."/>
            <person name="Lapidus A."/>
            <person name="Barry K."/>
            <person name="Glavina del Rio T."/>
            <person name="Dalin E."/>
            <person name="Tice H."/>
            <person name="Pitluck S."/>
            <person name="Bruce D."/>
            <person name="Goodwin L."/>
            <person name="Chertkov O."/>
            <person name="Brettin T."/>
            <person name="Detter J.C."/>
            <person name="Han C."/>
            <person name="Kuske C.R."/>
            <person name="Schmutz J."/>
            <person name="Larimer F."/>
            <person name="Land M."/>
            <person name="Hauser L."/>
            <person name="Kyrpides N."/>
            <person name="Kim E."/>
            <person name="McCarthy J.K."/>
            <person name="Richardson P."/>
        </authorList>
    </citation>
    <scope>NUCLEOTIDE SEQUENCE [LARGE SCALE GENOMIC DNA]</scope>
    <source>
        <strain>GB-1</strain>
    </source>
</reference>
<proteinExistence type="inferred from homology"/>
<dbReference type="EC" id="4.2.1.20" evidence="1"/>
<dbReference type="EMBL" id="CP000926">
    <property type="protein sequence ID" value="ABY96013.1"/>
    <property type="molecule type" value="Genomic_DNA"/>
</dbReference>
<dbReference type="RefSeq" id="WP_012269889.1">
    <property type="nucleotide sequence ID" value="NC_010322.1"/>
</dbReference>
<dbReference type="SMR" id="B0KFW2"/>
<dbReference type="KEGG" id="ppg:PputGB1_0097"/>
<dbReference type="eggNOG" id="COG0159">
    <property type="taxonomic scope" value="Bacteria"/>
</dbReference>
<dbReference type="HOGENOM" id="CLU_016734_0_4_6"/>
<dbReference type="UniPathway" id="UPA00035">
    <property type="reaction ID" value="UER00044"/>
</dbReference>
<dbReference type="Proteomes" id="UP000002157">
    <property type="component" value="Chromosome"/>
</dbReference>
<dbReference type="GO" id="GO:0005829">
    <property type="term" value="C:cytosol"/>
    <property type="evidence" value="ECO:0007669"/>
    <property type="project" value="TreeGrafter"/>
</dbReference>
<dbReference type="GO" id="GO:0004834">
    <property type="term" value="F:tryptophan synthase activity"/>
    <property type="evidence" value="ECO:0007669"/>
    <property type="project" value="UniProtKB-UniRule"/>
</dbReference>
<dbReference type="CDD" id="cd04724">
    <property type="entry name" value="Tryptophan_synthase_alpha"/>
    <property type="match status" value="1"/>
</dbReference>
<dbReference type="FunFam" id="3.20.20.70:FF:000037">
    <property type="entry name" value="Tryptophan synthase alpha chain"/>
    <property type="match status" value="1"/>
</dbReference>
<dbReference type="Gene3D" id="3.20.20.70">
    <property type="entry name" value="Aldolase class I"/>
    <property type="match status" value="1"/>
</dbReference>
<dbReference type="HAMAP" id="MF_00131">
    <property type="entry name" value="Trp_synth_alpha"/>
    <property type="match status" value="1"/>
</dbReference>
<dbReference type="InterPro" id="IPR013785">
    <property type="entry name" value="Aldolase_TIM"/>
</dbReference>
<dbReference type="InterPro" id="IPR011060">
    <property type="entry name" value="RibuloseP-bd_barrel"/>
</dbReference>
<dbReference type="InterPro" id="IPR018204">
    <property type="entry name" value="Trp_synthase_alpha_AS"/>
</dbReference>
<dbReference type="InterPro" id="IPR002028">
    <property type="entry name" value="Trp_synthase_suA"/>
</dbReference>
<dbReference type="NCBIfam" id="TIGR00262">
    <property type="entry name" value="trpA"/>
    <property type="match status" value="1"/>
</dbReference>
<dbReference type="PANTHER" id="PTHR43406:SF1">
    <property type="entry name" value="TRYPTOPHAN SYNTHASE ALPHA CHAIN, CHLOROPLASTIC"/>
    <property type="match status" value="1"/>
</dbReference>
<dbReference type="PANTHER" id="PTHR43406">
    <property type="entry name" value="TRYPTOPHAN SYNTHASE, ALPHA CHAIN"/>
    <property type="match status" value="1"/>
</dbReference>
<dbReference type="Pfam" id="PF00290">
    <property type="entry name" value="Trp_syntA"/>
    <property type="match status" value="1"/>
</dbReference>
<dbReference type="SUPFAM" id="SSF51366">
    <property type="entry name" value="Ribulose-phoshate binding barrel"/>
    <property type="match status" value="1"/>
</dbReference>
<dbReference type="PROSITE" id="PS00167">
    <property type="entry name" value="TRP_SYNTHASE_ALPHA"/>
    <property type="match status" value="1"/>
</dbReference>
<evidence type="ECO:0000255" key="1">
    <source>
        <dbReference type="HAMAP-Rule" id="MF_00131"/>
    </source>
</evidence>
<comment type="function">
    <text evidence="1">The alpha subunit is responsible for the aldol cleavage of indoleglycerol phosphate to indole and glyceraldehyde 3-phosphate.</text>
</comment>
<comment type="catalytic activity">
    <reaction evidence="1">
        <text>(1S,2R)-1-C-(indol-3-yl)glycerol 3-phosphate + L-serine = D-glyceraldehyde 3-phosphate + L-tryptophan + H2O</text>
        <dbReference type="Rhea" id="RHEA:10532"/>
        <dbReference type="ChEBI" id="CHEBI:15377"/>
        <dbReference type="ChEBI" id="CHEBI:33384"/>
        <dbReference type="ChEBI" id="CHEBI:57912"/>
        <dbReference type="ChEBI" id="CHEBI:58866"/>
        <dbReference type="ChEBI" id="CHEBI:59776"/>
        <dbReference type="EC" id="4.2.1.20"/>
    </reaction>
</comment>
<comment type="pathway">
    <text evidence="1">Amino-acid biosynthesis; L-tryptophan biosynthesis; L-tryptophan from chorismate: step 5/5.</text>
</comment>
<comment type="subunit">
    <text evidence="1">Tetramer of two alpha and two beta chains.</text>
</comment>
<comment type="similarity">
    <text evidence="1">Belongs to the TrpA family.</text>
</comment>
<feature type="chain" id="PRO_1000076363" description="Tryptophan synthase alpha chain">
    <location>
        <begin position="1"/>
        <end position="269"/>
    </location>
</feature>
<feature type="active site" description="Proton acceptor" evidence="1">
    <location>
        <position position="49"/>
    </location>
</feature>
<feature type="active site" description="Proton acceptor" evidence="1">
    <location>
        <position position="60"/>
    </location>
</feature>
<keyword id="KW-0028">Amino-acid biosynthesis</keyword>
<keyword id="KW-0057">Aromatic amino acid biosynthesis</keyword>
<keyword id="KW-0456">Lyase</keyword>
<keyword id="KW-0822">Tryptophan biosynthesis</keyword>
<protein>
    <recommendedName>
        <fullName evidence="1">Tryptophan synthase alpha chain</fullName>
        <ecNumber evidence="1">4.2.1.20</ecNumber>
    </recommendedName>
</protein>
<organism>
    <name type="scientific">Pseudomonas putida (strain GB-1)</name>
    <dbReference type="NCBI Taxonomy" id="76869"/>
    <lineage>
        <taxon>Bacteria</taxon>
        <taxon>Pseudomonadati</taxon>
        <taxon>Pseudomonadota</taxon>
        <taxon>Gammaproteobacteria</taxon>
        <taxon>Pseudomonadales</taxon>
        <taxon>Pseudomonadaceae</taxon>
        <taxon>Pseudomonas</taxon>
    </lineage>
</organism>
<name>TRPA_PSEPG</name>
<accession>B0KFW2</accession>